<sequence>MSRYTGPSWKKSRRLGLSLTGTGKELARRNYVPGQHGPNNRSKLSEYGLQLAEKQKLRFSYGLGEKQFRNLFVQATKIKGGILGYNFMLLLERRLDNVVYRLGLATTRRQARQFVNHGHILVDGKRVDIPSYRVEVGQVISVREKSAKVPAILEAVESVVGRPAFVSFDADKLEGSLTRLPERDEINPEINEALVVEFYNKML</sequence>
<comment type="function">
    <text evidence="1">One of the primary rRNA binding proteins, it binds directly to 16S rRNA where it nucleates assembly of the body of the 30S subunit.</text>
</comment>
<comment type="function">
    <text evidence="1">With S5 and S12 plays an important role in translational accuracy.</text>
</comment>
<comment type="subunit">
    <text evidence="1">Part of the 30S ribosomal subunit. Contacts protein S5. The interaction surface between S4 and S5 is involved in control of translational fidelity.</text>
</comment>
<comment type="similarity">
    <text evidence="1">Belongs to the universal ribosomal protein uS4 family.</text>
</comment>
<gene>
    <name evidence="1" type="primary">rpsD</name>
    <name type="ordered locus">SMU_2135c</name>
</gene>
<feature type="chain" id="PRO_0000132470" description="Small ribosomal subunit protein uS4">
    <location>
        <begin position="1"/>
        <end position="203"/>
    </location>
</feature>
<feature type="domain" description="S4 RNA-binding" evidence="1">
    <location>
        <begin position="93"/>
        <end position="156"/>
    </location>
</feature>
<proteinExistence type="inferred from homology"/>
<dbReference type="EMBL" id="AE014133">
    <property type="protein sequence ID" value="AAN59726.1"/>
    <property type="molecule type" value="Genomic_DNA"/>
</dbReference>
<dbReference type="RefSeq" id="NP_722420.1">
    <property type="nucleotide sequence ID" value="NC_004350.2"/>
</dbReference>
<dbReference type="RefSeq" id="WP_002262437.1">
    <property type="nucleotide sequence ID" value="NC_004350.2"/>
</dbReference>
<dbReference type="SMR" id="P59133"/>
<dbReference type="STRING" id="210007.SMU_2135c"/>
<dbReference type="GeneID" id="93860343"/>
<dbReference type="KEGG" id="smu:SMU_2135c"/>
<dbReference type="PATRIC" id="fig|210007.7.peg.1899"/>
<dbReference type="eggNOG" id="COG0522">
    <property type="taxonomic scope" value="Bacteria"/>
</dbReference>
<dbReference type="HOGENOM" id="CLU_092403_0_1_9"/>
<dbReference type="OrthoDB" id="9803672at2"/>
<dbReference type="PhylomeDB" id="P59133"/>
<dbReference type="Proteomes" id="UP000002512">
    <property type="component" value="Chromosome"/>
</dbReference>
<dbReference type="GO" id="GO:0015935">
    <property type="term" value="C:small ribosomal subunit"/>
    <property type="evidence" value="ECO:0007669"/>
    <property type="project" value="InterPro"/>
</dbReference>
<dbReference type="GO" id="GO:0019843">
    <property type="term" value="F:rRNA binding"/>
    <property type="evidence" value="ECO:0007669"/>
    <property type="project" value="UniProtKB-UniRule"/>
</dbReference>
<dbReference type="GO" id="GO:0003735">
    <property type="term" value="F:structural constituent of ribosome"/>
    <property type="evidence" value="ECO:0007669"/>
    <property type="project" value="InterPro"/>
</dbReference>
<dbReference type="GO" id="GO:0042274">
    <property type="term" value="P:ribosomal small subunit biogenesis"/>
    <property type="evidence" value="ECO:0007669"/>
    <property type="project" value="TreeGrafter"/>
</dbReference>
<dbReference type="GO" id="GO:0006412">
    <property type="term" value="P:translation"/>
    <property type="evidence" value="ECO:0007669"/>
    <property type="project" value="UniProtKB-UniRule"/>
</dbReference>
<dbReference type="CDD" id="cd00165">
    <property type="entry name" value="S4"/>
    <property type="match status" value="1"/>
</dbReference>
<dbReference type="FunFam" id="3.10.290.10:FF:000001">
    <property type="entry name" value="30S ribosomal protein S4"/>
    <property type="match status" value="1"/>
</dbReference>
<dbReference type="Gene3D" id="1.10.1050.10">
    <property type="entry name" value="Ribosomal Protein S4 Delta 41, Chain A, domain 1"/>
    <property type="match status" value="1"/>
</dbReference>
<dbReference type="Gene3D" id="3.10.290.10">
    <property type="entry name" value="RNA-binding S4 domain"/>
    <property type="match status" value="1"/>
</dbReference>
<dbReference type="HAMAP" id="MF_01306_B">
    <property type="entry name" value="Ribosomal_uS4_B"/>
    <property type="match status" value="1"/>
</dbReference>
<dbReference type="InterPro" id="IPR022801">
    <property type="entry name" value="Ribosomal_uS4"/>
</dbReference>
<dbReference type="InterPro" id="IPR005709">
    <property type="entry name" value="Ribosomal_uS4_bac-type"/>
</dbReference>
<dbReference type="InterPro" id="IPR018079">
    <property type="entry name" value="Ribosomal_uS4_CS"/>
</dbReference>
<dbReference type="InterPro" id="IPR001912">
    <property type="entry name" value="Ribosomal_uS4_N"/>
</dbReference>
<dbReference type="InterPro" id="IPR002942">
    <property type="entry name" value="S4_RNA-bd"/>
</dbReference>
<dbReference type="InterPro" id="IPR036986">
    <property type="entry name" value="S4_RNA-bd_sf"/>
</dbReference>
<dbReference type="NCBIfam" id="NF003717">
    <property type="entry name" value="PRK05327.1"/>
    <property type="match status" value="1"/>
</dbReference>
<dbReference type="NCBIfam" id="TIGR01017">
    <property type="entry name" value="rpsD_bact"/>
    <property type="match status" value="1"/>
</dbReference>
<dbReference type="PANTHER" id="PTHR11831">
    <property type="entry name" value="30S 40S RIBOSOMAL PROTEIN"/>
    <property type="match status" value="1"/>
</dbReference>
<dbReference type="PANTHER" id="PTHR11831:SF4">
    <property type="entry name" value="SMALL RIBOSOMAL SUBUNIT PROTEIN US4M"/>
    <property type="match status" value="1"/>
</dbReference>
<dbReference type="Pfam" id="PF00163">
    <property type="entry name" value="Ribosomal_S4"/>
    <property type="match status" value="1"/>
</dbReference>
<dbReference type="Pfam" id="PF01479">
    <property type="entry name" value="S4"/>
    <property type="match status" value="1"/>
</dbReference>
<dbReference type="SMART" id="SM01390">
    <property type="entry name" value="Ribosomal_S4"/>
    <property type="match status" value="1"/>
</dbReference>
<dbReference type="SMART" id="SM00363">
    <property type="entry name" value="S4"/>
    <property type="match status" value="1"/>
</dbReference>
<dbReference type="SUPFAM" id="SSF55174">
    <property type="entry name" value="Alpha-L RNA-binding motif"/>
    <property type="match status" value="1"/>
</dbReference>
<dbReference type="PROSITE" id="PS00632">
    <property type="entry name" value="RIBOSOMAL_S4"/>
    <property type="match status" value="1"/>
</dbReference>
<dbReference type="PROSITE" id="PS50889">
    <property type="entry name" value="S4"/>
    <property type="match status" value="1"/>
</dbReference>
<organism>
    <name type="scientific">Streptococcus mutans serotype c (strain ATCC 700610 / UA159)</name>
    <dbReference type="NCBI Taxonomy" id="210007"/>
    <lineage>
        <taxon>Bacteria</taxon>
        <taxon>Bacillati</taxon>
        <taxon>Bacillota</taxon>
        <taxon>Bacilli</taxon>
        <taxon>Lactobacillales</taxon>
        <taxon>Streptococcaceae</taxon>
        <taxon>Streptococcus</taxon>
    </lineage>
</organism>
<evidence type="ECO:0000255" key="1">
    <source>
        <dbReference type="HAMAP-Rule" id="MF_01306"/>
    </source>
</evidence>
<evidence type="ECO:0000305" key="2"/>
<accession>P59133</accession>
<keyword id="KW-1185">Reference proteome</keyword>
<keyword id="KW-0687">Ribonucleoprotein</keyword>
<keyword id="KW-0689">Ribosomal protein</keyword>
<keyword id="KW-0694">RNA-binding</keyword>
<keyword id="KW-0699">rRNA-binding</keyword>
<reference key="1">
    <citation type="journal article" date="2002" name="Proc. Natl. Acad. Sci. U.S.A.">
        <title>Genome sequence of Streptococcus mutans UA159, a cariogenic dental pathogen.</title>
        <authorList>
            <person name="Ajdic D.J."/>
            <person name="McShan W.M."/>
            <person name="McLaughlin R.E."/>
            <person name="Savic G."/>
            <person name="Chang J."/>
            <person name="Carson M.B."/>
            <person name="Primeaux C."/>
            <person name="Tian R."/>
            <person name="Kenton S."/>
            <person name="Jia H.G."/>
            <person name="Lin S.P."/>
            <person name="Qian Y."/>
            <person name="Li S."/>
            <person name="Zhu H."/>
            <person name="Najar F.Z."/>
            <person name="Lai H."/>
            <person name="White J."/>
            <person name="Roe B.A."/>
            <person name="Ferretti J.J."/>
        </authorList>
    </citation>
    <scope>NUCLEOTIDE SEQUENCE [LARGE SCALE GENOMIC DNA]</scope>
    <source>
        <strain>ATCC 700610 / UA159</strain>
    </source>
</reference>
<name>RS4_STRMU</name>
<protein>
    <recommendedName>
        <fullName evidence="1">Small ribosomal subunit protein uS4</fullName>
    </recommendedName>
    <alternativeName>
        <fullName evidence="2">30S ribosomal protein S4</fullName>
    </alternativeName>
</protein>